<comment type="function">
    <text evidence="1">The RuvA-RuvB-RuvC complex processes Holliday junction (HJ) DNA during genetic recombination and DNA repair, while the RuvA-RuvB complex plays an important role in the rescue of blocked DNA replication forks via replication fork reversal (RFR). RuvA specifically binds to HJ cruciform DNA, conferring on it an open structure. The RuvB hexamer acts as an ATP-dependent pump, pulling dsDNA into and through the RuvAB complex. RuvB forms 2 homohexamers on either side of HJ DNA bound by 1 or 2 RuvA tetramers; 4 subunits per hexamer contact DNA at a time. Coordinated motions by a converter formed by DNA-disengaged RuvB subunits stimulates ATP hydrolysis and nucleotide exchange. Immobilization of the converter enables RuvB to convert the ATP-contained energy into a lever motion, pulling 2 nucleotides of DNA out of the RuvA tetramer per ATP hydrolyzed, thus driving DNA branch migration. The RuvB motors rotate together with the DNA substrate, which together with the progressing nucleotide cycle form the mechanistic basis for DNA recombination by continuous HJ branch migration. Branch migration allows RuvC to scan DNA until it finds its consensus sequence, where it cleaves and resolves cruciform DNA.</text>
</comment>
<comment type="catalytic activity">
    <reaction evidence="1">
        <text>ATP + H2O = ADP + phosphate + H(+)</text>
        <dbReference type="Rhea" id="RHEA:13065"/>
        <dbReference type="ChEBI" id="CHEBI:15377"/>
        <dbReference type="ChEBI" id="CHEBI:15378"/>
        <dbReference type="ChEBI" id="CHEBI:30616"/>
        <dbReference type="ChEBI" id="CHEBI:43474"/>
        <dbReference type="ChEBI" id="CHEBI:456216"/>
    </reaction>
</comment>
<comment type="subunit">
    <text evidence="1">Homohexamer. Forms an RuvA(8)-RuvB(12)-Holliday junction (HJ) complex. HJ DNA is sandwiched between 2 RuvA tetramers; dsDNA enters through RuvA and exits via RuvB. An RuvB hexamer assembles on each DNA strand where it exits the tetramer. Each RuvB hexamer is contacted by two RuvA subunits (via domain III) on 2 adjacent RuvB subunits; this complex drives branch migration. In the full resolvosome a probable DNA-RuvA(4)-RuvB(12)-RuvC(2) complex forms which resolves the HJ.</text>
</comment>
<comment type="subcellular location">
    <subcellularLocation>
        <location evidence="1">Cytoplasm</location>
    </subcellularLocation>
</comment>
<comment type="domain">
    <text evidence="1">Has 3 domains, the large (RuvB-L) and small ATPase (RuvB-S) domains and the C-terminal head (RuvB-H) domain. The head domain binds DNA, while the ATPase domains jointly bind ATP, ADP or are empty depending on the state of the subunit in the translocation cycle. During a single DNA translocation step the structure of each domain remains the same, but their relative positions change.</text>
</comment>
<comment type="similarity">
    <text evidence="1">Belongs to the RuvB family.</text>
</comment>
<protein>
    <recommendedName>
        <fullName evidence="1">Holliday junction branch migration complex subunit RuvB</fullName>
        <ecNumber evidence="1">3.6.4.-</ecNumber>
    </recommendedName>
</protein>
<name>RUVB_STAAC</name>
<dbReference type="EC" id="3.6.4.-" evidence="1"/>
<dbReference type="EMBL" id="CP000046">
    <property type="protein sequence ID" value="AAW36802.1"/>
    <property type="molecule type" value="Genomic_DNA"/>
</dbReference>
<dbReference type="RefSeq" id="WP_001005767.1">
    <property type="nucleotide sequence ID" value="NZ_JBGOFO010000003.1"/>
</dbReference>
<dbReference type="SMR" id="Q5HFC2"/>
<dbReference type="KEGG" id="sac:SACOL1696"/>
<dbReference type="HOGENOM" id="CLU_055599_1_0_9"/>
<dbReference type="Proteomes" id="UP000000530">
    <property type="component" value="Chromosome"/>
</dbReference>
<dbReference type="GO" id="GO:0005737">
    <property type="term" value="C:cytoplasm"/>
    <property type="evidence" value="ECO:0007669"/>
    <property type="project" value="UniProtKB-SubCell"/>
</dbReference>
<dbReference type="GO" id="GO:0048476">
    <property type="term" value="C:Holliday junction resolvase complex"/>
    <property type="evidence" value="ECO:0007669"/>
    <property type="project" value="UniProtKB-UniRule"/>
</dbReference>
<dbReference type="GO" id="GO:0005524">
    <property type="term" value="F:ATP binding"/>
    <property type="evidence" value="ECO:0007669"/>
    <property type="project" value="UniProtKB-UniRule"/>
</dbReference>
<dbReference type="GO" id="GO:0016887">
    <property type="term" value="F:ATP hydrolysis activity"/>
    <property type="evidence" value="ECO:0007669"/>
    <property type="project" value="InterPro"/>
</dbReference>
<dbReference type="GO" id="GO:0000400">
    <property type="term" value="F:four-way junction DNA binding"/>
    <property type="evidence" value="ECO:0007669"/>
    <property type="project" value="UniProtKB-UniRule"/>
</dbReference>
<dbReference type="GO" id="GO:0009378">
    <property type="term" value="F:four-way junction helicase activity"/>
    <property type="evidence" value="ECO:0007669"/>
    <property type="project" value="InterPro"/>
</dbReference>
<dbReference type="GO" id="GO:0006310">
    <property type="term" value="P:DNA recombination"/>
    <property type="evidence" value="ECO:0007669"/>
    <property type="project" value="UniProtKB-UniRule"/>
</dbReference>
<dbReference type="GO" id="GO:0006281">
    <property type="term" value="P:DNA repair"/>
    <property type="evidence" value="ECO:0007669"/>
    <property type="project" value="UniProtKB-UniRule"/>
</dbReference>
<dbReference type="CDD" id="cd00009">
    <property type="entry name" value="AAA"/>
    <property type="match status" value="1"/>
</dbReference>
<dbReference type="Gene3D" id="1.10.8.60">
    <property type="match status" value="1"/>
</dbReference>
<dbReference type="Gene3D" id="3.40.50.300">
    <property type="entry name" value="P-loop containing nucleotide triphosphate hydrolases"/>
    <property type="match status" value="1"/>
</dbReference>
<dbReference type="Gene3D" id="1.10.10.10">
    <property type="entry name" value="Winged helix-like DNA-binding domain superfamily/Winged helix DNA-binding domain"/>
    <property type="match status" value="1"/>
</dbReference>
<dbReference type="HAMAP" id="MF_00016">
    <property type="entry name" value="DNA_HJ_migration_RuvB"/>
    <property type="match status" value="1"/>
</dbReference>
<dbReference type="InterPro" id="IPR003593">
    <property type="entry name" value="AAA+_ATPase"/>
</dbReference>
<dbReference type="InterPro" id="IPR041445">
    <property type="entry name" value="AAA_lid_4"/>
</dbReference>
<dbReference type="InterPro" id="IPR004605">
    <property type="entry name" value="DNA_helicase_Holl-junc_RuvB"/>
</dbReference>
<dbReference type="InterPro" id="IPR027417">
    <property type="entry name" value="P-loop_NTPase"/>
</dbReference>
<dbReference type="InterPro" id="IPR008824">
    <property type="entry name" value="RuvB-like_N"/>
</dbReference>
<dbReference type="InterPro" id="IPR008823">
    <property type="entry name" value="RuvB_C"/>
</dbReference>
<dbReference type="InterPro" id="IPR036388">
    <property type="entry name" value="WH-like_DNA-bd_sf"/>
</dbReference>
<dbReference type="InterPro" id="IPR036390">
    <property type="entry name" value="WH_DNA-bd_sf"/>
</dbReference>
<dbReference type="NCBIfam" id="NF000868">
    <property type="entry name" value="PRK00080.1"/>
    <property type="match status" value="1"/>
</dbReference>
<dbReference type="NCBIfam" id="TIGR00635">
    <property type="entry name" value="ruvB"/>
    <property type="match status" value="1"/>
</dbReference>
<dbReference type="PANTHER" id="PTHR42848">
    <property type="match status" value="1"/>
</dbReference>
<dbReference type="PANTHER" id="PTHR42848:SF1">
    <property type="entry name" value="HOLLIDAY JUNCTION BRANCH MIGRATION COMPLEX SUBUNIT RUVB"/>
    <property type="match status" value="1"/>
</dbReference>
<dbReference type="Pfam" id="PF17864">
    <property type="entry name" value="AAA_lid_4"/>
    <property type="match status" value="1"/>
</dbReference>
<dbReference type="Pfam" id="PF05491">
    <property type="entry name" value="RuvB_C"/>
    <property type="match status" value="1"/>
</dbReference>
<dbReference type="Pfam" id="PF05496">
    <property type="entry name" value="RuvB_N"/>
    <property type="match status" value="1"/>
</dbReference>
<dbReference type="SMART" id="SM00382">
    <property type="entry name" value="AAA"/>
    <property type="match status" value="1"/>
</dbReference>
<dbReference type="SUPFAM" id="SSF52540">
    <property type="entry name" value="P-loop containing nucleoside triphosphate hydrolases"/>
    <property type="match status" value="1"/>
</dbReference>
<dbReference type="SUPFAM" id="SSF46785">
    <property type="entry name" value="Winged helix' DNA-binding domain"/>
    <property type="match status" value="1"/>
</dbReference>
<feature type="chain" id="PRO_0000165594" description="Holliday junction branch migration complex subunit RuvB">
    <location>
        <begin position="1"/>
        <end position="334"/>
    </location>
</feature>
<feature type="region of interest" description="Large ATPase domain (RuvB-L)" evidence="1">
    <location>
        <begin position="1"/>
        <end position="182"/>
    </location>
</feature>
<feature type="region of interest" description="Small ATPAse domain (RuvB-S)" evidence="1">
    <location>
        <begin position="183"/>
        <end position="253"/>
    </location>
</feature>
<feature type="region of interest" description="Head domain (RuvB-H)" evidence="1">
    <location>
        <begin position="256"/>
        <end position="334"/>
    </location>
</feature>
<feature type="binding site" evidence="1">
    <location>
        <position position="21"/>
    </location>
    <ligand>
        <name>ATP</name>
        <dbReference type="ChEBI" id="CHEBI:30616"/>
    </ligand>
</feature>
<feature type="binding site" evidence="1">
    <location>
        <position position="22"/>
    </location>
    <ligand>
        <name>ATP</name>
        <dbReference type="ChEBI" id="CHEBI:30616"/>
    </ligand>
</feature>
<feature type="binding site" evidence="1">
    <location>
        <position position="63"/>
    </location>
    <ligand>
        <name>ATP</name>
        <dbReference type="ChEBI" id="CHEBI:30616"/>
    </ligand>
</feature>
<feature type="binding site" evidence="1">
    <location>
        <position position="66"/>
    </location>
    <ligand>
        <name>ATP</name>
        <dbReference type="ChEBI" id="CHEBI:30616"/>
    </ligand>
</feature>
<feature type="binding site" evidence="1">
    <location>
        <position position="67"/>
    </location>
    <ligand>
        <name>ATP</name>
        <dbReference type="ChEBI" id="CHEBI:30616"/>
    </ligand>
</feature>
<feature type="binding site" evidence="1">
    <location>
        <position position="67"/>
    </location>
    <ligand>
        <name>Mg(2+)</name>
        <dbReference type="ChEBI" id="CHEBI:18420"/>
    </ligand>
</feature>
<feature type="binding site" evidence="1">
    <location>
        <position position="68"/>
    </location>
    <ligand>
        <name>ATP</name>
        <dbReference type="ChEBI" id="CHEBI:30616"/>
    </ligand>
</feature>
<feature type="binding site" evidence="1">
    <location>
        <begin position="129"/>
        <end position="131"/>
    </location>
    <ligand>
        <name>ATP</name>
        <dbReference type="ChEBI" id="CHEBI:30616"/>
    </ligand>
</feature>
<feature type="binding site" evidence="1">
    <location>
        <position position="172"/>
    </location>
    <ligand>
        <name>ATP</name>
        <dbReference type="ChEBI" id="CHEBI:30616"/>
    </ligand>
</feature>
<feature type="binding site" evidence="1">
    <location>
        <position position="182"/>
    </location>
    <ligand>
        <name>ATP</name>
        <dbReference type="ChEBI" id="CHEBI:30616"/>
    </ligand>
</feature>
<feature type="binding site" evidence="1">
    <location>
        <position position="219"/>
    </location>
    <ligand>
        <name>ATP</name>
        <dbReference type="ChEBI" id="CHEBI:30616"/>
    </ligand>
</feature>
<feature type="binding site" evidence="1">
    <location>
        <position position="292"/>
    </location>
    <ligand>
        <name>DNA</name>
        <dbReference type="ChEBI" id="CHEBI:16991"/>
    </ligand>
</feature>
<feature type="binding site" evidence="1">
    <location>
        <position position="311"/>
    </location>
    <ligand>
        <name>DNA</name>
        <dbReference type="ChEBI" id="CHEBI:16991"/>
    </ligand>
</feature>
<feature type="binding site" evidence="1">
    <location>
        <position position="316"/>
    </location>
    <ligand>
        <name>DNA</name>
        <dbReference type="ChEBI" id="CHEBI:16991"/>
    </ligand>
</feature>
<evidence type="ECO:0000255" key="1">
    <source>
        <dbReference type="HAMAP-Rule" id="MF_00016"/>
    </source>
</evidence>
<organism>
    <name type="scientific">Staphylococcus aureus (strain COL)</name>
    <dbReference type="NCBI Taxonomy" id="93062"/>
    <lineage>
        <taxon>Bacteria</taxon>
        <taxon>Bacillati</taxon>
        <taxon>Bacillota</taxon>
        <taxon>Bacilli</taxon>
        <taxon>Bacillales</taxon>
        <taxon>Staphylococcaceae</taxon>
        <taxon>Staphylococcus</taxon>
    </lineage>
</organism>
<reference key="1">
    <citation type="journal article" date="2005" name="J. Bacteriol.">
        <title>Insights on evolution of virulence and resistance from the complete genome analysis of an early methicillin-resistant Staphylococcus aureus strain and a biofilm-producing methicillin-resistant Staphylococcus epidermidis strain.</title>
        <authorList>
            <person name="Gill S.R."/>
            <person name="Fouts D.E."/>
            <person name="Archer G.L."/>
            <person name="Mongodin E.F."/>
            <person name="DeBoy R.T."/>
            <person name="Ravel J."/>
            <person name="Paulsen I.T."/>
            <person name="Kolonay J.F."/>
            <person name="Brinkac L.M."/>
            <person name="Beanan M.J."/>
            <person name="Dodson R.J."/>
            <person name="Daugherty S.C."/>
            <person name="Madupu R."/>
            <person name="Angiuoli S.V."/>
            <person name="Durkin A.S."/>
            <person name="Haft D.H."/>
            <person name="Vamathevan J.J."/>
            <person name="Khouri H."/>
            <person name="Utterback T.R."/>
            <person name="Lee C."/>
            <person name="Dimitrov G."/>
            <person name="Jiang L."/>
            <person name="Qin H."/>
            <person name="Weidman J."/>
            <person name="Tran K."/>
            <person name="Kang K.H."/>
            <person name="Hance I.R."/>
            <person name="Nelson K.E."/>
            <person name="Fraser C.M."/>
        </authorList>
    </citation>
    <scope>NUCLEOTIDE SEQUENCE [LARGE SCALE GENOMIC DNA]</scope>
    <source>
        <strain>COL</strain>
    </source>
</reference>
<keyword id="KW-0067">ATP-binding</keyword>
<keyword id="KW-0963">Cytoplasm</keyword>
<keyword id="KW-0227">DNA damage</keyword>
<keyword id="KW-0233">DNA recombination</keyword>
<keyword id="KW-0234">DNA repair</keyword>
<keyword id="KW-0238">DNA-binding</keyword>
<keyword id="KW-0378">Hydrolase</keyword>
<keyword id="KW-0547">Nucleotide-binding</keyword>
<proteinExistence type="inferred from homology"/>
<accession>Q5HFC2</accession>
<gene>
    <name evidence="1" type="primary">ruvB</name>
    <name type="ordered locus">SACOL1696</name>
</gene>
<sequence>MNERMVDQSMHSEETDFELSLRPTRLRQYIGQNSIKSNLEVFIKAAKLRHEPLDHVLLFGPPGLGKTTLSNIIANEMEVNIRTVSGPSLERPGDLAAILSGLQPGDVLFIDEIHRLSSVVEEVLYPAMEDFFLDIIIGKGDEARSIRIDLPPFTLVGATTRAGSLTGPLRDRFGVHLRLEYYNESDLKEIIIRTAEVLGTGIDEESAIELAKRSRGTPRVANRLLKRVRDFQQVNEDEQIYIETTKHALGLLQVDQHGLDYIDHKMMNCIIKQYNGGPVGLDTIAVTIGEERITIEDVYEPFLIQKGFLERTPRGRKATPLAYEHFAKSNEERE</sequence>